<feature type="chain" id="PRO_0000247555" description="DPY30 domain-containing protein 1">
    <location>
        <begin position="1"/>
        <end position="175"/>
    </location>
</feature>
<keyword id="KW-0966">Cell projection</keyword>
<keyword id="KW-0969">Cilium</keyword>
<keyword id="KW-0963">Cytoplasm</keyword>
<keyword id="KW-0206">Cytoskeleton</keyword>
<keyword id="KW-0282">Flagellum</keyword>
<keyword id="KW-1185">Reference proteome</keyword>
<organism>
    <name type="scientific">Bos taurus</name>
    <name type="common">Bovine</name>
    <dbReference type="NCBI Taxonomy" id="9913"/>
    <lineage>
        <taxon>Eukaryota</taxon>
        <taxon>Metazoa</taxon>
        <taxon>Chordata</taxon>
        <taxon>Craniata</taxon>
        <taxon>Vertebrata</taxon>
        <taxon>Euteleostomi</taxon>
        <taxon>Mammalia</taxon>
        <taxon>Eutheria</taxon>
        <taxon>Laurasiatheria</taxon>
        <taxon>Artiodactyla</taxon>
        <taxon>Ruminantia</taxon>
        <taxon>Pecora</taxon>
        <taxon>Bovidae</taxon>
        <taxon>Bovinae</taxon>
        <taxon>Bos</taxon>
    </lineage>
</organism>
<protein>
    <recommendedName>
        <fullName>DPY30 domain-containing protein 1</fullName>
    </recommendedName>
</protein>
<accession>Q32LH1</accession>
<proteinExistence type="evidence at transcript level"/>
<reference key="1">
    <citation type="submission" date="2005-11" db="EMBL/GenBank/DDBJ databases">
        <authorList>
            <consortium name="NIH - Mammalian Gene Collection (MGC) project"/>
        </authorList>
    </citation>
    <scope>NUCLEOTIDE SEQUENCE [LARGE SCALE MRNA]</scope>
    <source>
        <strain>Crossbred X Angus</strain>
        <tissue>Liver</tissue>
    </source>
</reference>
<name>DYDC1_BOVIN</name>
<evidence type="ECO:0000250" key="1">
    <source>
        <dbReference type="UniProtKB" id="Q8WWB3"/>
    </source>
</evidence>
<evidence type="ECO:0000250" key="2">
    <source>
        <dbReference type="UniProtKB" id="Q9D9T0"/>
    </source>
</evidence>
<evidence type="ECO:0000305" key="3"/>
<sequence length="175" mass="20730">MESAYLHKFLGTCLTEGLAELARMRPVDPIEYLALWIYKYKKNVTMEKQRQEEMAQLEHEREVALMEQEMMERLRAEELLFQQQQLEFQLELEEQEKERQRIEELERAQEQFEKELRMSMENMAKEDTLHGEDGADSGKTLAEISDRYGAPNLSRVEELDEPMLSDVALNIDQDL</sequence>
<gene>
    <name type="primary">DYDC1</name>
</gene>
<comment type="function">
    <text evidence="1 2">Functions as part of axonemal radial spoke complexes that play an important part in the motility of sperm and cilia (By similarity). Plays a crucial role during acrosome biogenesis (By similarity).</text>
</comment>
<comment type="subunit">
    <text evidence="1 2">Component of the axonemal radial spoke complex 1 (RS1), at least composed of spoke head proteins RSPH1, RSPH3, RSPH9 and the cilia-specific component RSPH4A or sperm-specific component RSPH6A, spoke stalk proteins RSPH14, DNAJB13, DYDC1, ROPN1L and NME5, and the anchor protein IQUB (By similarity). Interacts with SH3GL3 (By similarity).</text>
</comment>
<comment type="subcellular location">
    <subcellularLocation>
        <location evidence="2">Cytoplasm</location>
        <location evidence="2">Cytoskeleton</location>
        <location evidence="2">Flagellum axoneme</location>
    </subcellularLocation>
</comment>
<comment type="similarity">
    <text evidence="3">Belongs to the dpy-30 family.</text>
</comment>
<dbReference type="EMBL" id="BC109581">
    <property type="protein sequence ID" value="AAI09582.1"/>
    <property type="molecule type" value="mRNA"/>
</dbReference>
<dbReference type="RefSeq" id="NP_001035661.1">
    <property type="nucleotide sequence ID" value="NM_001040571.2"/>
</dbReference>
<dbReference type="RefSeq" id="XP_005226507.1">
    <property type="nucleotide sequence ID" value="XM_005226450.3"/>
</dbReference>
<dbReference type="RefSeq" id="XP_010818921.1">
    <property type="nucleotide sequence ID" value="XM_010820619.2"/>
</dbReference>
<dbReference type="RefSeq" id="XP_024842533.1">
    <property type="nucleotide sequence ID" value="XM_024986765.2"/>
</dbReference>
<dbReference type="EMDB" id="EMD-50664"/>
<dbReference type="SMR" id="Q32LH1"/>
<dbReference type="FunCoup" id="Q32LH1">
    <property type="interactions" value="6"/>
</dbReference>
<dbReference type="STRING" id="9913.ENSBTAP00000043925"/>
<dbReference type="PaxDb" id="9913-ENSBTAP00000043925"/>
<dbReference type="Ensembl" id="ENSBTAT00000127385.1">
    <property type="protein sequence ID" value="ENSBTAP00000090330.1"/>
    <property type="gene ID" value="ENSBTAG00000032858.5"/>
</dbReference>
<dbReference type="GeneID" id="613509"/>
<dbReference type="KEGG" id="bta:613509"/>
<dbReference type="CTD" id="143241"/>
<dbReference type="VEuPathDB" id="HostDB:ENSBTAG00000032858"/>
<dbReference type="VGNC" id="VGNC:28267">
    <property type="gene designation" value="DYDC1"/>
</dbReference>
<dbReference type="eggNOG" id="ENOG502S3U3">
    <property type="taxonomic scope" value="Eukaryota"/>
</dbReference>
<dbReference type="GeneTree" id="ENSGT00940000161631"/>
<dbReference type="HOGENOM" id="CLU_117703_1_0_1"/>
<dbReference type="InParanoid" id="Q32LH1"/>
<dbReference type="OMA" id="ELMFQQQ"/>
<dbReference type="OrthoDB" id="432281at2759"/>
<dbReference type="TreeFam" id="TF330747"/>
<dbReference type="Proteomes" id="UP000009136">
    <property type="component" value="Chromosome 28"/>
</dbReference>
<dbReference type="Bgee" id="ENSBTAG00000032858">
    <property type="expression patterns" value="Expressed in semen and 43 other cell types or tissues"/>
</dbReference>
<dbReference type="GO" id="GO:0031514">
    <property type="term" value="C:motile cilium"/>
    <property type="evidence" value="ECO:0007669"/>
    <property type="project" value="UniProtKB-KW"/>
</dbReference>
<dbReference type="GO" id="GO:0001534">
    <property type="term" value="C:radial spoke"/>
    <property type="evidence" value="ECO:0000250"/>
    <property type="project" value="UniProtKB"/>
</dbReference>
<dbReference type="GO" id="GO:0048188">
    <property type="term" value="C:Set1C/COMPASS complex"/>
    <property type="evidence" value="ECO:0007669"/>
    <property type="project" value="InterPro"/>
</dbReference>
<dbReference type="CDD" id="cd22966">
    <property type="entry name" value="DD_DYDC-like"/>
    <property type="match status" value="1"/>
</dbReference>
<dbReference type="FunFam" id="1.20.890.10:FF:000009">
    <property type="entry name" value="DPY30 domain-containing protein 1"/>
    <property type="match status" value="1"/>
</dbReference>
<dbReference type="Gene3D" id="1.20.890.10">
    <property type="entry name" value="cAMP-dependent protein kinase regulatory subunit, dimerization-anchoring domain"/>
    <property type="match status" value="1"/>
</dbReference>
<dbReference type="InterPro" id="IPR007858">
    <property type="entry name" value="Dpy-30_motif"/>
</dbReference>
<dbReference type="InterPro" id="IPR049630">
    <property type="entry name" value="DYDC-like_DD"/>
</dbReference>
<dbReference type="InterPro" id="IPR037856">
    <property type="entry name" value="Sdc1/DPY30"/>
</dbReference>
<dbReference type="PANTHER" id="PTHR23356:SF4">
    <property type="entry name" value="DPY30 DOMAIN-CONTAINING PROTEIN 1"/>
    <property type="match status" value="1"/>
</dbReference>
<dbReference type="PANTHER" id="PTHR23356">
    <property type="entry name" value="DPY30-RELATED"/>
    <property type="match status" value="1"/>
</dbReference>
<dbReference type="Pfam" id="PF05186">
    <property type="entry name" value="Dpy-30"/>
    <property type="match status" value="1"/>
</dbReference>